<gene>
    <name type="primary">dhkB</name>
    <name type="ORF">DDB_G0277845</name>
</gene>
<organism>
    <name type="scientific">Dictyostelium discoideum</name>
    <name type="common">Social amoeba</name>
    <dbReference type="NCBI Taxonomy" id="44689"/>
    <lineage>
        <taxon>Eukaryota</taxon>
        <taxon>Amoebozoa</taxon>
        <taxon>Evosea</taxon>
        <taxon>Eumycetozoa</taxon>
        <taxon>Dictyostelia</taxon>
        <taxon>Dictyosteliales</taxon>
        <taxon>Dictyosteliaceae</taxon>
        <taxon>Dictyostelium</taxon>
    </lineage>
</organism>
<comment type="function">
    <text evidence="5">Acts in the cytokinin signal transduction pathway that regulates spore germination. Required for the maintenance of spore dormancy. Does not appear to act as a cytokinin receptor. Probably undergoes ATP-dependent autophosphorylation at a conserved histidine residue in the kinase core, which is followed by transfer of the phosphoryl group to a conserved aspartate residue in the receiver domain.</text>
</comment>
<comment type="catalytic activity">
    <reaction>
        <text>ATP + protein L-histidine = ADP + protein N-phospho-L-histidine.</text>
        <dbReference type="EC" id="2.7.13.3"/>
    </reaction>
</comment>
<comment type="subcellular location">
    <subcellularLocation>
        <location evidence="7">Membrane</location>
        <topology evidence="7">Multi-pass membrane protein</topology>
    </subcellularLocation>
</comment>
<comment type="developmental stage">
    <text evidence="6">Expressed in growing cells at low levels. Expression increases following initiation of development. Peaks around 12 hours (tipped aggregate stage), and remains at a high level throughout the remainder of development.</text>
</comment>
<evidence type="ECO:0000255" key="1"/>
<evidence type="ECO:0000255" key="2">
    <source>
        <dbReference type="PROSITE-ProRule" id="PRU00107"/>
    </source>
</evidence>
<evidence type="ECO:0000255" key="3">
    <source>
        <dbReference type="PROSITE-ProRule" id="PRU00169"/>
    </source>
</evidence>
<evidence type="ECO:0000256" key="4">
    <source>
        <dbReference type="SAM" id="MobiDB-lite"/>
    </source>
</evidence>
<evidence type="ECO:0000269" key="5">
    <source>
    </source>
</evidence>
<evidence type="ECO:0000269" key="6">
    <source>
    </source>
</evidence>
<evidence type="ECO:0000305" key="7"/>
<reference key="1">
    <citation type="journal article" date="1998" name="Dev. Biol.">
        <title>The hybrid histidine kinase dhkB regulates spore germination in Dictyostelium discoideum.</title>
        <authorList>
            <person name="Zinda M.J."/>
            <person name="Singleton C.K."/>
        </authorList>
    </citation>
    <scope>NUCLEOTIDE SEQUENCE [GENOMIC DNA]</scope>
    <scope>CHARACTERIZATION</scope>
    <scope>DEVELOPMENTAL STAGE</scope>
    <source>
        <strain>AX3-1</strain>
    </source>
</reference>
<reference key="2">
    <citation type="journal article" date="2005" name="Nature">
        <title>The genome of the social amoeba Dictyostelium discoideum.</title>
        <authorList>
            <person name="Eichinger L."/>
            <person name="Pachebat J.A."/>
            <person name="Gloeckner G."/>
            <person name="Rajandream M.A."/>
            <person name="Sucgang R."/>
            <person name="Berriman M."/>
            <person name="Song J."/>
            <person name="Olsen R."/>
            <person name="Szafranski K."/>
            <person name="Xu Q."/>
            <person name="Tunggal B."/>
            <person name="Kummerfeld S."/>
            <person name="Madera M."/>
            <person name="Konfortov B.A."/>
            <person name="Rivero F."/>
            <person name="Bankier A.T."/>
            <person name="Lehmann R."/>
            <person name="Hamlin N."/>
            <person name="Davies R."/>
            <person name="Gaudet P."/>
            <person name="Fey P."/>
            <person name="Pilcher K."/>
            <person name="Chen G."/>
            <person name="Saunders D."/>
            <person name="Sodergren E.J."/>
            <person name="Davis P."/>
            <person name="Kerhornou A."/>
            <person name="Nie X."/>
            <person name="Hall N."/>
            <person name="Anjard C."/>
            <person name="Hemphill L."/>
            <person name="Bason N."/>
            <person name="Farbrother P."/>
            <person name="Desany B."/>
            <person name="Just E."/>
            <person name="Morio T."/>
            <person name="Rost R."/>
            <person name="Churcher C.M."/>
            <person name="Cooper J."/>
            <person name="Haydock S."/>
            <person name="van Driessche N."/>
            <person name="Cronin A."/>
            <person name="Goodhead I."/>
            <person name="Muzny D.M."/>
            <person name="Mourier T."/>
            <person name="Pain A."/>
            <person name="Lu M."/>
            <person name="Harper D."/>
            <person name="Lindsay R."/>
            <person name="Hauser H."/>
            <person name="James K.D."/>
            <person name="Quiles M."/>
            <person name="Madan Babu M."/>
            <person name="Saito T."/>
            <person name="Buchrieser C."/>
            <person name="Wardroper A."/>
            <person name="Felder M."/>
            <person name="Thangavelu M."/>
            <person name="Johnson D."/>
            <person name="Knights A."/>
            <person name="Loulseged H."/>
            <person name="Mungall K.L."/>
            <person name="Oliver K."/>
            <person name="Price C."/>
            <person name="Quail M.A."/>
            <person name="Urushihara H."/>
            <person name="Hernandez J."/>
            <person name="Rabbinowitsch E."/>
            <person name="Steffen D."/>
            <person name="Sanders M."/>
            <person name="Ma J."/>
            <person name="Kohara Y."/>
            <person name="Sharp S."/>
            <person name="Simmonds M.N."/>
            <person name="Spiegler S."/>
            <person name="Tivey A."/>
            <person name="Sugano S."/>
            <person name="White B."/>
            <person name="Walker D."/>
            <person name="Woodward J.R."/>
            <person name="Winckler T."/>
            <person name="Tanaka Y."/>
            <person name="Shaulsky G."/>
            <person name="Schleicher M."/>
            <person name="Weinstock G.M."/>
            <person name="Rosenthal A."/>
            <person name="Cox E.C."/>
            <person name="Chisholm R.L."/>
            <person name="Gibbs R.A."/>
            <person name="Loomis W.F."/>
            <person name="Platzer M."/>
            <person name="Kay R.R."/>
            <person name="Williams J.G."/>
            <person name="Dear P.H."/>
            <person name="Noegel A.A."/>
            <person name="Barrell B.G."/>
            <person name="Kuspa A."/>
        </authorList>
    </citation>
    <scope>NUCLEOTIDE SEQUENCE [LARGE SCALE GENOMIC DNA]</scope>
    <source>
        <strain>AX4</strain>
    </source>
</reference>
<reference key="3">
    <citation type="journal article" date="2008" name="Development">
        <title>Cytokinins induce sporulation in Dictyostelium.</title>
        <authorList>
            <person name="Anjard C."/>
            <person name="Loomis W.F."/>
        </authorList>
    </citation>
    <scope>FUNCTION</scope>
</reference>
<accession>Q54YH4</accession>
<accession>O15763</accession>
<name>DHKB_DICDI</name>
<proteinExistence type="evidence at protein level"/>
<protein>
    <recommendedName>
        <fullName>Hybrid signal transduction histidine kinase B</fullName>
        <ecNumber>2.7.13.3</ecNumber>
    </recommendedName>
</protein>
<feature type="chain" id="PRO_0000328205" description="Hybrid signal transduction histidine kinase B">
    <location>
        <begin position="1"/>
        <end position="1969"/>
    </location>
</feature>
<feature type="transmembrane region" description="Helical" evidence="1">
    <location>
        <begin position="660"/>
        <end position="680"/>
    </location>
</feature>
<feature type="transmembrane region" description="Helical" evidence="1">
    <location>
        <begin position="684"/>
        <end position="704"/>
    </location>
</feature>
<feature type="transmembrane region" description="Helical" evidence="1">
    <location>
        <begin position="708"/>
        <end position="728"/>
    </location>
</feature>
<feature type="transmembrane region" description="Helical" evidence="1">
    <location>
        <begin position="747"/>
        <end position="767"/>
    </location>
</feature>
<feature type="transmembrane region" description="Helical" evidence="1">
    <location>
        <begin position="795"/>
        <end position="815"/>
    </location>
</feature>
<feature type="domain" description="Histidine kinase" evidence="2">
    <location>
        <begin position="967"/>
        <end position="1188"/>
    </location>
</feature>
<feature type="domain" description="Response regulatory" evidence="3">
    <location>
        <begin position="1840"/>
        <end position="1967"/>
    </location>
</feature>
<feature type="region of interest" description="Disordered" evidence="4">
    <location>
        <begin position="1"/>
        <end position="91"/>
    </location>
</feature>
<feature type="region of interest" description="Disordered" evidence="4">
    <location>
        <begin position="218"/>
        <end position="335"/>
    </location>
</feature>
<feature type="region of interest" description="Disordered" evidence="4">
    <location>
        <begin position="412"/>
        <end position="436"/>
    </location>
</feature>
<feature type="region of interest" description="Disordered" evidence="4">
    <location>
        <begin position="468"/>
        <end position="505"/>
    </location>
</feature>
<feature type="region of interest" description="Disordered" evidence="4">
    <location>
        <begin position="551"/>
        <end position="598"/>
    </location>
</feature>
<feature type="region of interest" description="Disordered" evidence="4">
    <location>
        <begin position="1359"/>
        <end position="1415"/>
    </location>
</feature>
<feature type="region of interest" description="Disordered" evidence="4">
    <location>
        <begin position="1521"/>
        <end position="1563"/>
    </location>
</feature>
<feature type="region of interest" description="Disordered" evidence="4">
    <location>
        <begin position="1617"/>
        <end position="1709"/>
    </location>
</feature>
<feature type="region of interest" description="Disordered" evidence="4">
    <location>
        <begin position="1755"/>
        <end position="1832"/>
    </location>
</feature>
<feature type="compositionally biased region" description="Polar residues" evidence="4">
    <location>
        <begin position="1"/>
        <end position="10"/>
    </location>
</feature>
<feature type="compositionally biased region" description="Low complexity" evidence="4">
    <location>
        <begin position="11"/>
        <end position="55"/>
    </location>
</feature>
<feature type="compositionally biased region" description="Basic and acidic residues" evidence="4">
    <location>
        <begin position="56"/>
        <end position="65"/>
    </location>
</feature>
<feature type="compositionally biased region" description="Basic residues" evidence="4">
    <location>
        <begin position="72"/>
        <end position="86"/>
    </location>
</feature>
<feature type="compositionally biased region" description="Polar residues" evidence="4">
    <location>
        <begin position="242"/>
        <end position="252"/>
    </location>
</feature>
<feature type="compositionally biased region" description="Low complexity" evidence="4">
    <location>
        <begin position="280"/>
        <end position="292"/>
    </location>
</feature>
<feature type="compositionally biased region" description="Polar residues" evidence="4">
    <location>
        <begin position="293"/>
        <end position="304"/>
    </location>
</feature>
<feature type="compositionally biased region" description="Low complexity" evidence="4">
    <location>
        <begin position="313"/>
        <end position="335"/>
    </location>
</feature>
<feature type="compositionally biased region" description="Basic residues" evidence="4">
    <location>
        <begin position="416"/>
        <end position="425"/>
    </location>
</feature>
<feature type="compositionally biased region" description="Polar residues" evidence="4">
    <location>
        <begin position="469"/>
        <end position="492"/>
    </location>
</feature>
<feature type="compositionally biased region" description="Gly residues" evidence="4">
    <location>
        <begin position="551"/>
        <end position="571"/>
    </location>
</feature>
<feature type="compositionally biased region" description="Low complexity" evidence="4">
    <location>
        <begin position="574"/>
        <end position="598"/>
    </location>
</feature>
<feature type="compositionally biased region" description="Gly residues" evidence="4">
    <location>
        <begin position="1373"/>
        <end position="1398"/>
    </location>
</feature>
<feature type="compositionally biased region" description="Low complexity" evidence="4">
    <location>
        <begin position="1399"/>
        <end position="1410"/>
    </location>
</feature>
<feature type="compositionally biased region" description="Low complexity" evidence="4">
    <location>
        <begin position="1527"/>
        <end position="1549"/>
    </location>
</feature>
<feature type="compositionally biased region" description="Polar residues" evidence="4">
    <location>
        <begin position="1554"/>
        <end position="1563"/>
    </location>
</feature>
<feature type="compositionally biased region" description="Polar residues" evidence="4">
    <location>
        <begin position="1626"/>
        <end position="1665"/>
    </location>
</feature>
<feature type="compositionally biased region" description="Low complexity" evidence="4">
    <location>
        <begin position="1755"/>
        <end position="1774"/>
    </location>
</feature>
<feature type="compositionally biased region" description="Low complexity" evidence="4">
    <location>
        <begin position="1781"/>
        <end position="1821"/>
    </location>
</feature>
<feature type="modified residue" description="Phosphohistidine; by autocatalysis" evidence="2">
    <location>
        <position position="970"/>
    </location>
</feature>
<feature type="modified residue" description="4-aspartylphosphate" evidence="3">
    <location>
        <position position="1889"/>
    </location>
</feature>
<feature type="sequence conflict" description="In Ref. 1; AAB71889." evidence="7" ref="1">
    <original>C</original>
    <variation>F</variation>
    <location>
        <position position="1059"/>
    </location>
</feature>
<feature type="sequence conflict" description="In Ref. 1; AAB71889." evidence="7" ref="1">
    <original>ES</original>
    <variation>VT</variation>
    <location>
        <begin position="1104"/>
        <end position="1105"/>
    </location>
</feature>
<feature type="sequence conflict" description="In Ref. 1; AAB71889." evidence="7" ref="1">
    <original>Q</original>
    <variation>P</variation>
    <location>
        <position position="1131"/>
    </location>
</feature>
<feature type="sequence conflict" description="In Ref. 1; AAB71889." evidence="7" ref="1">
    <original>Q</original>
    <variation>R</variation>
    <location>
        <position position="1148"/>
    </location>
</feature>
<feature type="sequence conflict" description="In Ref. 1; AAB71889." evidence="7" ref="1">
    <original>S</original>
    <variation>C</variation>
    <location>
        <position position="1531"/>
    </location>
</feature>
<feature type="sequence conflict" description="In Ref. 1; AAB71889." evidence="7" ref="1">
    <original>K</original>
    <variation>N</variation>
    <location>
        <position position="1966"/>
    </location>
</feature>
<sequence length="1969" mass="218999">MEKSEQTNSFESSNNNNNNIDSNINNNLENNNNKNNNNNNNNNNNNNNNNNNIENSIDKNNKEDNSLVGVNSHRKHRTRLKSKKGNKHETKKEIDYKDLLIKLPHNAVSNFNSLENESSDNLTPPPPINSSPLPLPLSLPLPLSLPLPLPLPLPLPLPLPPNKENIEINMEDIIIPENKIKNKNNNNNIDINNNNNNNNEKQTSIIEMEDLDKLKQPKINEGSTGKKGKSHFFSFLQRGDKTNSSILKSSEQPTHKKTKTNINTPPDYPIHYFGHHKRFSSSSDEGSDNSKSQHSSVNTPTLSRHNIDSLPESQQSQKQSQQQSQQPQQQNKTKQIQQTILNNNNDNLNEVTPIKKSSLPTLEVSPIQSNIINNQTTEKHNSGGFTALTSASAMNHQNQRRYREHHQINHQQQQQQHHRHYHHHINSGGSSGSSDKFDYVSATGLSTKNGFNPKSLDVDHFPISDKRNNINIQAPSTPVQSRNYPLFTTQSPKNANSASKSKNKLKNLKRKIASSITGNNPSGISSSAFNHSFSSWNNNNSVYTGGNSGGGSGGGGSGGGGGGGGGGGGIGTPSSFLDDNNNLNNGENFKNSNSYNNNNGSNRSISHDEWLRQFYHKHLERYEKTKAVDYLIIKPWNFISWILRPSRIANYQSKILYRRAYILNFLNLVLFVVYLLSTILSSNEWFIFAPGILLSVIYFFLGKINNKMYLIAFLTISTAVAINITSIIYDLTHTRPTDKLIFSWDLLVMIMVPLLFPSIVYSIVILISVAVTYIGLGIYVQSSHNFYLLDAYDSFGELLRSIIIVFVILMFYTILSSVDLKEIERKESRIQSLFRISNEALVVHKDGLITDANPAFESMFQIKLQDLLYPIQSGIWEFLPALEGMFEPGASKLFDNPDMGVIETTGIDSSGRTFQVEVRTNKATYDGEPVDVISIIDITGRKQLMEADYALRKAEAANEAKVIFLTTVSHELRTPINGVLASADILERTTLDSTQKEFLNCIKLSGNYLLDLINDILDYSKIEAGKMEIIKYDFSILKMLDNSIRIVSKNIYEKGLDLCIFIDPNVPVIVNGDQRRIKQILLNFLSNSIKFTNHGQIIIRVKLESDDSTHSLIKFDVEDSGIGIKTEHLNQLFASFSQIDSGNSRKYQGTGLGLSISKRLCKMMGGDVKVKSEFGVGSTFSFTIPCGIPNTTTRFSLQSLGSAIYMGEDIQGINKPIGKKKYGASGVVGIVIDSNKYTRKSISQYFAILKISCVDFENKKEFENYLSTLATVDQTTNPQVYLVITSIIDINQLTTNGLPRDRIYHWILMESPNEERKLPLEFENRFVKPAQFADIVRCLYKIDSINFFIEQMAGSPYKASKDLQSGGSSNESGDGGRSLSGGGGGVGSNGNGNGGGGLDSNISPSELSSSEHQLISTPLSDVNEFEDINLINQSLSGLGPSAKVLNSTYFNGLSQSSKIYNNNNRNGVGIGNHHHDHYYQHRHHHSLPPEEIDYDESPFLFLNKPIRKVYHSQPSTPVTNGIALMDSSSKSPSIPSSSSASASALSPNSRHSNELGNGKTTQSFVFSPTSRKFSLNDSFNPSISTIVLPQVSYSPSMQGGNFPINMESVYKKIESHNNNFKRSESKPSTPTFLSNQPSPATSNSPQLLQSPTTSTTGSINLSPHRSPNIRLPLEVRSGSLSSLKPLREDEELESISDDHTSHLKGSSHSINQQIPSTIQQQQQQQQQQQQQQQQQQQQQQQQQQQQQQQQQQQQQKPQQQQQKPTTTTTTTSTQLPQNIEKTTTTTTTSTTKPTATSSSSSSSKTTKTQQQQHHPTTTTTTKSEKIEKTAAATTSEKIEKILLVEDNFVNVKIFSKLLKDSGYIFDVAHNGVEAVECVKKGAYDLILMDCQMPEMDGFEATTAIRELEKSNLIESPPSKKHSHVVIVALTANSGYKDKQKCLSVGMNDFLQKPIKTSDILIQMIKKHLN</sequence>
<dbReference type="EC" id="2.7.13.3"/>
<dbReference type="EMBL" id="AF024654">
    <property type="protein sequence ID" value="AAB71889.1"/>
    <property type="molecule type" value="Genomic_DNA"/>
</dbReference>
<dbReference type="EMBL" id="AAFI02000023">
    <property type="protein sequence ID" value="EAL68095.1"/>
    <property type="molecule type" value="Genomic_DNA"/>
</dbReference>
<dbReference type="PIR" id="T08875">
    <property type="entry name" value="T08875"/>
</dbReference>
<dbReference type="RefSeq" id="XP_642228.1">
    <property type="nucleotide sequence ID" value="XM_637136.1"/>
</dbReference>
<dbReference type="SMR" id="Q54YH4"/>
<dbReference type="STRING" id="44689.Q54YH4"/>
<dbReference type="PaxDb" id="44689-DDB0215358"/>
<dbReference type="EnsemblProtists" id="EAL68095">
    <property type="protein sequence ID" value="EAL68095"/>
    <property type="gene ID" value="DDB_G0277845"/>
</dbReference>
<dbReference type="GeneID" id="8621437"/>
<dbReference type="KEGG" id="ddi:DDB_G0277845"/>
<dbReference type="dictyBase" id="DDB_G0277845">
    <property type="gene designation" value="dhkB"/>
</dbReference>
<dbReference type="VEuPathDB" id="AmoebaDB:DDB_G0277845"/>
<dbReference type="eggNOG" id="KOG0519">
    <property type="taxonomic scope" value="Eukaryota"/>
</dbReference>
<dbReference type="HOGENOM" id="CLU_234459_0_0_1"/>
<dbReference type="InParanoid" id="Q54YH4"/>
<dbReference type="OMA" id="HWILMES"/>
<dbReference type="PRO" id="PR:Q54YH4"/>
<dbReference type="Proteomes" id="UP000002195">
    <property type="component" value="Chromosome 3"/>
</dbReference>
<dbReference type="GO" id="GO:0016020">
    <property type="term" value="C:membrane"/>
    <property type="evidence" value="ECO:0007669"/>
    <property type="project" value="UniProtKB-SubCell"/>
</dbReference>
<dbReference type="GO" id="GO:0005524">
    <property type="term" value="F:ATP binding"/>
    <property type="evidence" value="ECO:0007669"/>
    <property type="project" value="UniProtKB-KW"/>
</dbReference>
<dbReference type="GO" id="GO:0000155">
    <property type="term" value="F:phosphorelay sensor kinase activity"/>
    <property type="evidence" value="ECO:0007669"/>
    <property type="project" value="InterPro"/>
</dbReference>
<dbReference type="GO" id="GO:0009736">
    <property type="term" value="P:cytokinin-activated signaling pathway"/>
    <property type="evidence" value="ECO:0000315"/>
    <property type="project" value="dictyBase"/>
</dbReference>
<dbReference type="GO" id="GO:1904359">
    <property type="term" value="P:regulation of spore germination"/>
    <property type="evidence" value="ECO:0000315"/>
    <property type="project" value="dictyBase"/>
</dbReference>
<dbReference type="GO" id="GO:0031288">
    <property type="term" value="P:sorocarp morphogenesis"/>
    <property type="evidence" value="ECO:0000316"/>
    <property type="project" value="dictyBase"/>
</dbReference>
<dbReference type="CDD" id="cd16922">
    <property type="entry name" value="HATPase_EvgS-ArcB-TorS-like"/>
    <property type="match status" value="1"/>
</dbReference>
<dbReference type="CDD" id="cd00082">
    <property type="entry name" value="HisKA"/>
    <property type="match status" value="1"/>
</dbReference>
<dbReference type="CDD" id="cd17546">
    <property type="entry name" value="REC_hyHK_CKI1_RcsC-like"/>
    <property type="match status" value="1"/>
</dbReference>
<dbReference type="FunFam" id="3.30.565.10:FF:000301">
    <property type="entry name" value="Hybrid signal transduction histidine kinase B"/>
    <property type="match status" value="1"/>
</dbReference>
<dbReference type="FunFam" id="1.10.287.130:FF:000089">
    <property type="entry name" value="Sensor histidine kinase"/>
    <property type="match status" value="1"/>
</dbReference>
<dbReference type="Gene3D" id="1.10.287.130">
    <property type="match status" value="1"/>
</dbReference>
<dbReference type="Gene3D" id="3.40.50.2300">
    <property type="match status" value="1"/>
</dbReference>
<dbReference type="Gene3D" id="3.30.565.10">
    <property type="entry name" value="Histidine kinase-like ATPase, C-terminal domain"/>
    <property type="match status" value="1"/>
</dbReference>
<dbReference type="Gene3D" id="3.30.450.20">
    <property type="entry name" value="PAS domain"/>
    <property type="match status" value="1"/>
</dbReference>
<dbReference type="InterPro" id="IPR050956">
    <property type="entry name" value="2C_system_His_kinase"/>
</dbReference>
<dbReference type="InterPro" id="IPR011006">
    <property type="entry name" value="CheY-like_superfamily"/>
</dbReference>
<dbReference type="InterPro" id="IPR036890">
    <property type="entry name" value="HATPase_C_sf"/>
</dbReference>
<dbReference type="InterPro" id="IPR005467">
    <property type="entry name" value="His_kinase_dom"/>
</dbReference>
<dbReference type="InterPro" id="IPR003661">
    <property type="entry name" value="HisK_dim/P_dom"/>
</dbReference>
<dbReference type="InterPro" id="IPR036097">
    <property type="entry name" value="HisK_dim/P_sf"/>
</dbReference>
<dbReference type="InterPro" id="IPR000014">
    <property type="entry name" value="PAS"/>
</dbReference>
<dbReference type="InterPro" id="IPR035965">
    <property type="entry name" value="PAS-like_dom_sf"/>
</dbReference>
<dbReference type="InterPro" id="IPR004358">
    <property type="entry name" value="Sig_transdc_His_kin-like_C"/>
</dbReference>
<dbReference type="InterPro" id="IPR001789">
    <property type="entry name" value="Sig_transdc_resp-reg_receiver"/>
</dbReference>
<dbReference type="NCBIfam" id="TIGR00229">
    <property type="entry name" value="sensory_box"/>
    <property type="match status" value="1"/>
</dbReference>
<dbReference type="PANTHER" id="PTHR43719:SF18">
    <property type="entry name" value="HYBRID SIGNAL TRANSDUCTION HISTIDINE KINASE B"/>
    <property type="match status" value="1"/>
</dbReference>
<dbReference type="PANTHER" id="PTHR43719">
    <property type="entry name" value="TWO-COMPONENT HISTIDINE KINASE"/>
    <property type="match status" value="1"/>
</dbReference>
<dbReference type="Pfam" id="PF02518">
    <property type="entry name" value="HATPase_c"/>
    <property type="match status" value="1"/>
</dbReference>
<dbReference type="Pfam" id="PF00512">
    <property type="entry name" value="HisKA"/>
    <property type="match status" value="1"/>
</dbReference>
<dbReference type="Pfam" id="PF13188">
    <property type="entry name" value="PAS_8"/>
    <property type="match status" value="1"/>
</dbReference>
<dbReference type="Pfam" id="PF00072">
    <property type="entry name" value="Response_reg"/>
    <property type="match status" value="1"/>
</dbReference>
<dbReference type="PRINTS" id="PR00344">
    <property type="entry name" value="BCTRLSENSOR"/>
</dbReference>
<dbReference type="SMART" id="SM00387">
    <property type="entry name" value="HATPase_c"/>
    <property type="match status" value="1"/>
</dbReference>
<dbReference type="SMART" id="SM00388">
    <property type="entry name" value="HisKA"/>
    <property type="match status" value="1"/>
</dbReference>
<dbReference type="SMART" id="SM00448">
    <property type="entry name" value="REC"/>
    <property type="match status" value="1"/>
</dbReference>
<dbReference type="SUPFAM" id="SSF55874">
    <property type="entry name" value="ATPase domain of HSP90 chaperone/DNA topoisomerase II/histidine kinase"/>
    <property type="match status" value="1"/>
</dbReference>
<dbReference type="SUPFAM" id="SSF52172">
    <property type="entry name" value="CheY-like"/>
    <property type="match status" value="1"/>
</dbReference>
<dbReference type="SUPFAM" id="SSF47384">
    <property type="entry name" value="Homodimeric domain of signal transducing histidine kinase"/>
    <property type="match status" value="1"/>
</dbReference>
<dbReference type="SUPFAM" id="SSF55785">
    <property type="entry name" value="PYP-like sensor domain (PAS domain)"/>
    <property type="match status" value="1"/>
</dbReference>
<dbReference type="PROSITE" id="PS50109">
    <property type="entry name" value="HIS_KIN"/>
    <property type="match status" value="1"/>
</dbReference>
<dbReference type="PROSITE" id="PS50110">
    <property type="entry name" value="RESPONSE_REGULATORY"/>
    <property type="match status" value="1"/>
</dbReference>
<keyword id="KW-0067">ATP-binding</keyword>
<keyword id="KW-0217">Developmental protein</keyword>
<keyword id="KW-0418">Kinase</keyword>
<keyword id="KW-0472">Membrane</keyword>
<keyword id="KW-0547">Nucleotide-binding</keyword>
<keyword id="KW-0597">Phosphoprotein</keyword>
<keyword id="KW-1185">Reference proteome</keyword>
<keyword id="KW-0808">Transferase</keyword>
<keyword id="KW-0812">Transmembrane</keyword>
<keyword id="KW-1133">Transmembrane helix</keyword>